<proteinExistence type="inferred from homology"/>
<dbReference type="EC" id="4.1.1.39" evidence="1"/>
<dbReference type="EMBL" id="X56621">
    <property type="protein sequence ID" value="CAA39959.1"/>
    <property type="molecule type" value="Genomic_DNA"/>
</dbReference>
<dbReference type="SMR" id="Q06023"/>
<dbReference type="GO" id="GO:0009507">
    <property type="term" value="C:chloroplast"/>
    <property type="evidence" value="ECO:0007669"/>
    <property type="project" value="UniProtKB-SubCell"/>
</dbReference>
<dbReference type="GO" id="GO:0000287">
    <property type="term" value="F:magnesium ion binding"/>
    <property type="evidence" value="ECO:0007669"/>
    <property type="project" value="UniProtKB-UniRule"/>
</dbReference>
<dbReference type="GO" id="GO:0004497">
    <property type="term" value="F:monooxygenase activity"/>
    <property type="evidence" value="ECO:0007669"/>
    <property type="project" value="UniProtKB-KW"/>
</dbReference>
<dbReference type="GO" id="GO:0016984">
    <property type="term" value="F:ribulose-bisphosphate carboxylase activity"/>
    <property type="evidence" value="ECO:0007669"/>
    <property type="project" value="UniProtKB-UniRule"/>
</dbReference>
<dbReference type="GO" id="GO:0009853">
    <property type="term" value="P:photorespiration"/>
    <property type="evidence" value="ECO:0007669"/>
    <property type="project" value="UniProtKB-KW"/>
</dbReference>
<dbReference type="GO" id="GO:0019253">
    <property type="term" value="P:reductive pentose-phosphate cycle"/>
    <property type="evidence" value="ECO:0007669"/>
    <property type="project" value="UniProtKB-UniRule"/>
</dbReference>
<dbReference type="CDD" id="cd08212">
    <property type="entry name" value="RuBisCO_large_I"/>
    <property type="match status" value="1"/>
</dbReference>
<dbReference type="FunFam" id="3.20.20.110:FF:000001">
    <property type="entry name" value="Ribulose bisphosphate carboxylase large chain"/>
    <property type="match status" value="1"/>
</dbReference>
<dbReference type="FunFam" id="3.30.70.150:FF:000001">
    <property type="entry name" value="Ribulose bisphosphate carboxylase large chain"/>
    <property type="match status" value="1"/>
</dbReference>
<dbReference type="Gene3D" id="3.20.20.110">
    <property type="entry name" value="Ribulose bisphosphate carboxylase, large subunit, C-terminal domain"/>
    <property type="match status" value="1"/>
</dbReference>
<dbReference type="Gene3D" id="3.30.70.150">
    <property type="entry name" value="RuBisCO large subunit, N-terminal domain"/>
    <property type="match status" value="1"/>
</dbReference>
<dbReference type="HAMAP" id="MF_01338">
    <property type="entry name" value="RuBisCO_L_type1"/>
    <property type="match status" value="1"/>
</dbReference>
<dbReference type="InterPro" id="IPR033966">
    <property type="entry name" value="RuBisCO"/>
</dbReference>
<dbReference type="InterPro" id="IPR020878">
    <property type="entry name" value="RuBisCo_large_chain_AS"/>
</dbReference>
<dbReference type="InterPro" id="IPR000685">
    <property type="entry name" value="RuBisCO_lsu_C"/>
</dbReference>
<dbReference type="InterPro" id="IPR036376">
    <property type="entry name" value="RuBisCO_lsu_C_sf"/>
</dbReference>
<dbReference type="InterPro" id="IPR017443">
    <property type="entry name" value="RuBisCO_lsu_fd_N"/>
</dbReference>
<dbReference type="InterPro" id="IPR036422">
    <property type="entry name" value="RuBisCO_lsu_N_sf"/>
</dbReference>
<dbReference type="InterPro" id="IPR020888">
    <property type="entry name" value="RuBisCO_lsuI"/>
</dbReference>
<dbReference type="NCBIfam" id="NF003252">
    <property type="entry name" value="PRK04208.1"/>
    <property type="match status" value="1"/>
</dbReference>
<dbReference type="PANTHER" id="PTHR42704">
    <property type="entry name" value="RIBULOSE BISPHOSPHATE CARBOXYLASE"/>
    <property type="match status" value="1"/>
</dbReference>
<dbReference type="PANTHER" id="PTHR42704:SF15">
    <property type="entry name" value="RIBULOSE BISPHOSPHATE CARBOXYLASE LARGE CHAIN"/>
    <property type="match status" value="1"/>
</dbReference>
<dbReference type="Pfam" id="PF00016">
    <property type="entry name" value="RuBisCO_large"/>
    <property type="match status" value="1"/>
</dbReference>
<dbReference type="Pfam" id="PF02788">
    <property type="entry name" value="RuBisCO_large_N"/>
    <property type="match status" value="1"/>
</dbReference>
<dbReference type="SFLD" id="SFLDG01052">
    <property type="entry name" value="RuBisCO"/>
    <property type="match status" value="1"/>
</dbReference>
<dbReference type="SFLD" id="SFLDS00014">
    <property type="entry name" value="RuBisCO"/>
    <property type="match status" value="1"/>
</dbReference>
<dbReference type="SFLD" id="SFLDG00301">
    <property type="entry name" value="RuBisCO-like_proteins"/>
    <property type="match status" value="1"/>
</dbReference>
<dbReference type="SUPFAM" id="SSF51649">
    <property type="entry name" value="RuBisCo, C-terminal domain"/>
    <property type="match status" value="1"/>
</dbReference>
<dbReference type="SUPFAM" id="SSF54966">
    <property type="entry name" value="RuBisCO, large subunit, small (N-terminal) domain"/>
    <property type="match status" value="1"/>
</dbReference>
<dbReference type="PROSITE" id="PS00157">
    <property type="entry name" value="RUBISCO_LARGE"/>
    <property type="match status" value="1"/>
</dbReference>
<reference key="1">
    <citation type="journal article" date="1992" name="Mol. Biol. Evol.">
        <title>Complete congruence between morphological and rbcL-based molecular phylogenies in birches and related species (Betulaceae).</title>
        <authorList>
            <person name="Bousquet J."/>
            <person name="Strauss S.H."/>
            <person name="Li P."/>
        </authorList>
    </citation>
    <scope>NUCLEOTIDE SEQUENCE [GENOMIC DNA]</scope>
    <source>
        <tissue>Leaf</tissue>
    </source>
</reference>
<comment type="function">
    <text evidence="1">RuBisCO catalyzes two reactions: the carboxylation of D-ribulose 1,5-bisphosphate, the primary event in carbon dioxide fixation, as well as the oxidative fragmentation of the pentose substrate in the photorespiration process. Both reactions occur simultaneously and in competition at the same active site.</text>
</comment>
<comment type="catalytic activity">
    <reaction evidence="1">
        <text>2 (2R)-3-phosphoglycerate + 2 H(+) = D-ribulose 1,5-bisphosphate + CO2 + H2O</text>
        <dbReference type="Rhea" id="RHEA:23124"/>
        <dbReference type="ChEBI" id="CHEBI:15377"/>
        <dbReference type="ChEBI" id="CHEBI:15378"/>
        <dbReference type="ChEBI" id="CHEBI:16526"/>
        <dbReference type="ChEBI" id="CHEBI:57870"/>
        <dbReference type="ChEBI" id="CHEBI:58272"/>
        <dbReference type="EC" id="4.1.1.39"/>
    </reaction>
</comment>
<comment type="catalytic activity">
    <reaction evidence="1">
        <text>D-ribulose 1,5-bisphosphate + O2 = 2-phosphoglycolate + (2R)-3-phosphoglycerate + 2 H(+)</text>
        <dbReference type="Rhea" id="RHEA:36631"/>
        <dbReference type="ChEBI" id="CHEBI:15378"/>
        <dbReference type="ChEBI" id="CHEBI:15379"/>
        <dbReference type="ChEBI" id="CHEBI:57870"/>
        <dbReference type="ChEBI" id="CHEBI:58033"/>
        <dbReference type="ChEBI" id="CHEBI:58272"/>
    </reaction>
</comment>
<comment type="cofactor">
    <cofactor evidence="1">
        <name>Mg(2+)</name>
        <dbReference type="ChEBI" id="CHEBI:18420"/>
    </cofactor>
    <text evidence="1">Binds 1 Mg(2+) ion per subunit.</text>
</comment>
<comment type="subunit">
    <text evidence="1">Heterohexadecamer of 8 large chains and 8 small chains; disulfide-linked. The disulfide link is formed within the large subunit homodimers.</text>
</comment>
<comment type="subcellular location">
    <subcellularLocation>
        <location>Plastid</location>
        <location>Chloroplast</location>
    </subcellularLocation>
</comment>
<comment type="PTM">
    <text evidence="1">The disulfide bond which can form in the large chain dimeric partners within the hexadecamer appears to be associated with oxidative stress and protein turnover.</text>
</comment>
<comment type="miscellaneous">
    <text evidence="1">The basic functional RuBisCO is composed of a large chain homodimer in a 'head-to-tail' conformation. In form I RuBisCO this homodimer is arranged in a barrel-like tetramer with the small subunits forming a tetrameric 'cap' on each end of the 'barrel'.</text>
</comment>
<comment type="similarity">
    <text evidence="1">Belongs to the RuBisCO large chain family. Type I subfamily.</text>
</comment>
<feature type="propeptide" id="PRO_0000031157" evidence="1">
    <location>
        <begin position="1"/>
        <end position="2"/>
    </location>
</feature>
<feature type="chain" id="PRO_0000031158" description="Ribulose bisphosphate carboxylase large chain">
    <location>
        <begin position="3"/>
        <end position="475"/>
    </location>
</feature>
<feature type="active site" description="Proton acceptor" evidence="1">
    <location>
        <position position="175"/>
    </location>
</feature>
<feature type="active site" description="Proton acceptor" evidence="1">
    <location>
        <position position="294"/>
    </location>
</feature>
<feature type="binding site" description="in homodimeric partner" evidence="1">
    <location>
        <position position="123"/>
    </location>
    <ligand>
        <name>substrate</name>
    </ligand>
</feature>
<feature type="binding site" evidence="1">
    <location>
        <position position="173"/>
    </location>
    <ligand>
        <name>substrate</name>
    </ligand>
</feature>
<feature type="binding site" evidence="1">
    <location>
        <position position="177"/>
    </location>
    <ligand>
        <name>substrate</name>
    </ligand>
</feature>
<feature type="binding site" description="via carbamate group" evidence="1">
    <location>
        <position position="201"/>
    </location>
    <ligand>
        <name>Mg(2+)</name>
        <dbReference type="ChEBI" id="CHEBI:18420"/>
    </ligand>
</feature>
<feature type="binding site" evidence="1">
    <location>
        <position position="203"/>
    </location>
    <ligand>
        <name>Mg(2+)</name>
        <dbReference type="ChEBI" id="CHEBI:18420"/>
    </ligand>
</feature>
<feature type="binding site" evidence="1">
    <location>
        <position position="204"/>
    </location>
    <ligand>
        <name>Mg(2+)</name>
        <dbReference type="ChEBI" id="CHEBI:18420"/>
    </ligand>
</feature>
<feature type="binding site" evidence="1">
    <location>
        <position position="295"/>
    </location>
    <ligand>
        <name>substrate</name>
    </ligand>
</feature>
<feature type="binding site" evidence="1">
    <location>
        <position position="327"/>
    </location>
    <ligand>
        <name>substrate</name>
    </ligand>
</feature>
<feature type="binding site" evidence="1">
    <location>
        <position position="379"/>
    </location>
    <ligand>
        <name>substrate</name>
    </ligand>
</feature>
<feature type="site" description="Transition state stabilizer" evidence="1">
    <location>
        <position position="334"/>
    </location>
</feature>
<feature type="modified residue" description="N-acetylproline" evidence="1">
    <location>
        <position position="3"/>
    </location>
</feature>
<feature type="modified residue" description="N6,N6,N6-trimethyllysine" evidence="1">
    <location>
        <position position="14"/>
    </location>
</feature>
<feature type="modified residue" description="N6-carboxylysine" evidence="1">
    <location>
        <position position="201"/>
    </location>
</feature>
<feature type="disulfide bond" description="Interchain; in linked form" evidence="1">
    <location>
        <position position="247"/>
    </location>
</feature>
<protein>
    <recommendedName>
        <fullName evidence="1">Ribulose bisphosphate carboxylase large chain</fullName>
        <shortName evidence="1">RuBisCO large subunit</shortName>
        <ecNumber evidence="1">4.1.1.39</ecNumber>
    </recommendedName>
</protein>
<organism>
    <name type="scientific">Carpinus caroliniana</name>
    <name type="common">American hornbeam</name>
    <dbReference type="NCBI Taxonomy" id="12991"/>
    <lineage>
        <taxon>Eukaryota</taxon>
        <taxon>Viridiplantae</taxon>
        <taxon>Streptophyta</taxon>
        <taxon>Embryophyta</taxon>
        <taxon>Tracheophyta</taxon>
        <taxon>Spermatophyta</taxon>
        <taxon>Magnoliopsida</taxon>
        <taxon>eudicotyledons</taxon>
        <taxon>Gunneridae</taxon>
        <taxon>Pentapetalae</taxon>
        <taxon>rosids</taxon>
        <taxon>fabids</taxon>
        <taxon>Fagales</taxon>
        <taxon>Betulaceae</taxon>
        <taxon>Carpinus</taxon>
    </lineage>
</organism>
<keyword id="KW-0007">Acetylation</keyword>
<keyword id="KW-0113">Calvin cycle</keyword>
<keyword id="KW-0120">Carbon dioxide fixation</keyword>
<keyword id="KW-0150">Chloroplast</keyword>
<keyword id="KW-1015">Disulfide bond</keyword>
<keyword id="KW-0456">Lyase</keyword>
<keyword id="KW-0460">Magnesium</keyword>
<keyword id="KW-0479">Metal-binding</keyword>
<keyword id="KW-0488">Methylation</keyword>
<keyword id="KW-0503">Monooxygenase</keyword>
<keyword id="KW-0560">Oxidoreductase</keyword>
<keyword id="KW-0601">Photorespiration</keyword>
<keyword id="KW-0602">Photosynthesis</keyword>
<keyword id="KW-0934">Plastid</keyword>
<evidence type="ECO:0000255" key="1">
    <source>
        <dbReference type="HAMAP-Rule" id="MF_01338"/>
    </source>
</evidence>
<accession>Q06023</accession>
<sequence length="475" mass="52539">MSPQTETKASVGFKAGVKDYKLTYHTPDYETKDTDILAAFRVTPQPGVPAEEAGAAVAAESSTGTWTTVWTDGLTSLDRYKGRCYHIEPVAGEESQFIAYVAYPLDLFEEGSVTNMFTSIVGNVFGFKALRALRLEDLRIPTAYTKTFQGPPHGIQVERDKLNKYGRPLLGCTIKPKLGLSAKNYGRAVYECLRGGLDFTKDDENVNSQPFMRWRDRFLFCAEAIYKAQAETGEIKGHYLNATAGTCEEMMKRAVFARELGVPIVMHDYLTGGFTANTSLAHYCRDNGLLLHIHRAMHAVIDRQKNHGMHFRVLAKALRMSGGDHIHAGTVVGKLEGEREITLGFVDLLRDDYIEKDRSRGIYFTQDWVSLPGVLPVASGGIHVWHMPALTEIFGDDSVLQFGGGTLGHPWGNAPGAVANRVALEACVQARNEGRDLAREGNEIIRAAAKWSPELAAACEVWKEIKFEFPAMDTL</sequence>
<geneLocation type="chloroplast"/>
<name>RBL_CARCO</name>
<gene>
    <name evidence="1" type="primary">rbcL</name>
</gene>